<feature type="chain" id="PRO_0000106566" description="Gene product 5B">
    <location>
        <begin position="1"/>
        <end position="65"/>
    </location>
</feature>
<comment type="similarity">
    <text evidence="1">Belongs to the phi29likevirus GP5.5 family.</text>
</comment>
<keyword id="KW-0244">Early protein</keyword>
<sequence length="65" mass="7266">METQVKVLVLVGALFINTYTDNYKSVDLTHDSEQAYGFKDKWEAQQVAAKVGGQVVVRTTSFKIV</sequence>
<evidence type="ECO:0000305" key="1"/>
<accession>P06954</accession>
<dbReference type="EMBL" id="M11813">
    <property type="protein sequence ID" value="AAA88474.1"/>
    <property type="molecule type" value="Genomic_DNA"/>
</dbReference>
<dbReference type="PIR" id="H24528">
    <property type="entry name" value="ERBP5Z"/>
</dbReference>
<dbReference type="SMR" id="P06954"/>
<dbReference type="Proteomes" id="UP000000855">
    <property type="component" value="Segment"/>
</dbReference>
<gene>
    <name type="primary">5B</name>
</gene>
<reference key="1">
    <citation type="journal article" date="1985" name="Gene">
        <title>Nucleotide sequence of the major early region of Bacillus subtilis phage PZA, a close relative of phi 29.</title>
        <authorList>
            <person name="Paces V."/>
            <person name="Vlcek C."/>
            <person name="Urbanek P."/>
            <person name="Hostomsky Z."/>
        </authorList>
    </citation>
    <scope>NUCLEOTIDE SEQUENCE [GENOMIC DNA]</scope>
</reference>
<protein>
    <recommendedName>
        <fullName>Gene product 5B</fullName>
        <shortName>gp5B</shortName>
    </recommendedName>
    <alternativeName>
        <fullName>Protein p5B</fullName>
    </alternativeName>
</protein>
<name>GP55_BPPZA</name>
<organismHost>
    <name type="scientific">Bacillus subtilis</name>
    <dbReference type="NCBI Taxonomy" id="1423"/>
</organismHost>
<organism>
    <name type="scientific">Bacillus phage PZA</name>
    <name type="common">Bacteriophage PZA</name>
    <dbReference type="NCBI Taxonomy" id="10757"/>
    <lineage>
        <taxon>Viruses</taxon>
        <taxon>Duplodnaviria</taxon>
        <taxon>Heunggongvirae</taxon>
        <taxon>Uroviricota</taxon>
        <taxon>Caudoviricetes</taxon>
        <taxon>Salasmaviridae</taxon>
        <taxon>Picovirinae</taxon>
        <taxon>Salasvirus</taxon>
        <taxon>Salasvirus PZA</taxon>
    </lineage>
</organism>
<proteinExistence type="inferred from homology"/>